<evidence type="ECO:0000256" key="1">
    <source>
        <dbReference type="SAM" id="MobiDB-lite"/>
    </source>
</evidence>
<evidence type="ECO:0000305" key="2"/>
<keyword id="KW-0053">Apoptosis</keyword>
<keyword id="KW-0244">Early protein</keyword>
<keyword id="KW-1048">Host nucleus</keyword>
<keyword id="KW-0945">Host-virus interaction</keyword>
<keyword id="KW-1098">Inhibition of host mitotic exit by virus</keyword>
<keyword id="KW-1121">Modulation of host cell cycle by virus</keyword>
<gene>
    <name type="primary">VP3</name>
</gene>
<organismHost>
    <name type="scientific">Gallus gallus</name>
    <name type="common">Chicken</name>
    <dbReference type="NCBI Taxonomy" id="9031"/>
</organismHost>
<reference key="1">
    <citation type="journal article" date="1995" name="Virology">
        <title>Gene organization of chicken anemia virus.</title>
        <authorList>
            <person name="Kato A."/>
            <person name="Fujino M."/>
            <person name="Nakamura T."/>
            <person name="Ishihama A."/>
            <person name="Otaki Y."/>
        </authorList>
    </citation>
    <scope>NUCLEOTIDE SEQUENCE [GENOMIC DNA]</scope>
</reference>
<comment type="function">
    <text>May act as transcriptional regulator. Induces apoptosis in infected cells. Element of infectious replication cycle.</text>
</comment>
<comment type="subcellular location">
    <subcellularLocation>
        <location>Host nucleus</location>
    </subcellularLocation>
    <text>Host nucleus of infected cells.</text>
</comment>
<comment type="induction">
    <text>VP1 and VP2 are detected 12 hours post infection, while VP3 only after 24 hours.</text>
</comment>
<comment type="similarity">
    <text evidence="2">Belongs to the gyrovirus apoptin family.</text>
</comment>
<organism>
    <name type="scientific">Chicken anemia virus (isolate Japan 82-2)</name>
    <name type="common">CAV</name>
    <dbReference type="NCBI Taxonomy" id="73476"/>
    <lineage>
        <taxon>Viruses</taxon>
        <taxon>Viruses incertae sedis</taxon>
        <taxon>Anelloviridae</taxon>
        <taxon>Gyrovirus</taxon>
        <taxon>Gyrovirus chickenanemia</taxon>
    </lineage>
</organism>
<feature type="chain" id="PRO_0000223007" description="Apoptin">
    <location>
        <begin position="1"/>
        <end position="121"/>
    </location>
</feature>
<feature type="region of interest" description="Disordered" evidence="1">
    <location>
        <begin position="1"/>
        <end position="28"/>
    </location>
</feature>
<feature type="region of interest" description="Disordered" evidence="1">
    <location>
        <begin position="57"/>
        <end position="121"/>
    </location>
</feature>
<feature type="compositionally biased region" description="Polar residues" evidence="1">
    <location>
        <begin position="58"/>
        <end position="70"/>
    </location>
</feature>
<feature type="compositionally biased region" description="Basic and acidic residues" evidence="1">
    <location>
        <begin position="88"/>
        <end position="102"/>
    </location>
</feature>
<name>VP3_CAV82</name>
<accession>P54096</accession>
<dbReference type="EMBL" id="D31965">
    <property type="protein sequence ID" value="BAA06733.1"/>
    <property type="molecule type" value="Genomic_DNA"/>
</dbReference>
<dbReference type="Proteomes" id="UP000008443">
    <property type="component" value="Genome"/>
</dbReference>
<dbReference type="GO" id="GO:0042025">
    <property type="term" value="C:host cell nucleus"/>
    <property type="evidence" value="ECO:0007669"/>
    <property type="project" value="UniProtKB-SubCell"/>
</dbReference>
<dbReference type="GO" id="GO:0052151">
    <property type="term" value="P:symbiont-mediated activation of host apoptosis"/>
    <property type="evidence" value="ECO:0007669"/>
    <property type="project" value="InterPro"/>
</dbReference>
<dbReference type="GO" id="GO:0039593">
    <property type="term" value="P:symbiont-mediated perturbation of host exit from mitosis"/>
    <property type="evidence" value="ECO:0007669"/>
    <property type="project" value="UniProtKB-KW"/>
</dbReference>
<dbReference type="InterPro" id="IPR006858">
    <property type="entry name" value="CAV_VP3"/>
</dbReference>
<dbReference type="Pfam" id="PF04771">
    <property type="entry name" value="CAV_VP3"/>
    <property type="match status" value="1"/>
</dbReference>
<sequence>MNALQEDTPPGPSTVFRPPTSSRPLETPHCREIRIGIAGITITLSLCGCANARAPTLRSATADNSESTGFKNVPDLRTDQPKPPSKKRSCDPSEYRVSELKESLTTTTPSRPRTARRCIRL</sequence>
<proteinExistence type="evidence at transcript level"/>
<protein>
    <recommendedName>
        <fullName>Apoptin</fullName>
    </recommendedName>
</protein>